<name>GCSH_SHESR</name>
<gene>
    <name evidence="1" type="primary">gcvH</name>
    <name type="ordered locus">Shewmr7_0623</name>
</gene>
<organism>
    <name type="scientific">Shewanella sp. (strain MR-7)</name>
    <dbReference type="NCBI Taxonomy" id="60481"/>
    <lineage>
        <taxon>Bacteria</taxon>
        <taxon>Pseudomonadati</taxon>
        <taxon>Pseudomonadota</taxon>
        <taxon>Gammaproteobacteria</taxon>
        <taxon>Alteromonadales</taxon>
        <taxon>Shewanellaceae</taxon>
        <taxon>Shewanella</taxon>
    </lineage>
</organism>
<protein>
    <recommendedName>
        <fullName evidence="1">Glycine cleavage system H protein</fullName>
    </recommendedName>
</protein>
<dbReference type="EMBL" id="CP000444">
    <property type="protein sequence ID" value="ABI41626.1"/>
    <property type="molecule type" value="Genomic_DNA"/>
</dbReference>
<dbReference type="SMR" id="Q0HZ29"/>
<dbReference type="KEGG" id="shm:Shewmr7_0623"/>
<dbReference type="HOGENOM" id="CLU_097408_2_1_6"/>
<dbReference type="GO" id="GO:0005829">
    <property type="term" value="C:cytosol"/>
    <property type="evidence" value="ECO:0007669"/>
    <property type="project" value="TreeGrafter"/>
</dbReference>
<dbReference type="GO" id="GO:0005960">
    <property type="term" value="C:glycine cleavage complex"/>
    <property type="evidence" value="ECO:0007669"/>
    <property type="project" value="InterPro"/>
</dbReference>
<dbReference type="GO" id="GO:0019464">
    <property type="term" value="P:glycine decarboxylation via glycine cleavage system"/>
    <property type="evidence" value="ECO:0007669"/>
    <property type="project" value="UniProtKB-UniRule"/>
</dbReference>
<dbReference type="CDD" id="cd06848">
    <property type="entry name" value="GCS_H"/>
    <property type="match status" value="1"/>
</dbReference>
<dbReference type="FunFam" id="2.40.50.100:FF:000011">
    <property type="entry name" value="Glycine cleavage system H protein"/>
    <property type="match status" value="1"/>
</dbReference>
<dbReference type="Gene3D" id="2.40.50.100">
    <property type="match status" value="1"/>
</dbReference>
<dbReference type="HAMAP" id="MF_00272">
    <property type="entry name" value="GcvH"/>
    <property type="match status" value="1"/>
</dbReference>
<dbReference type="InterPro" id="IPR003016">
    <property type="entry name" value="2-oxoA_DH_lipoyl-BS"/>
</dbReference>
<dbReference type="InterPro" id="IPR000089">
    <property type="entry name" value="Biotin_lipoyl"/>
</dbReference>
<dbReference type="InterPro" id="IPR002930">
    <property type="entry name" value="GCV_H"/>
</dbReference>
<dbReference type="InterPro" id="IPR033753">
    <property type="entry name" value="GCV_H/Fam206"/>
</dbReference>
<dbReference type="InterPro" id="IPR017453">
    <property type="entry name" value="GCV_H_sub"/>
</dbReference>
<dbReference type="InterPro" id="IPR011053">
    <property type="entry name" value="Single_hybrid_motif"/>
</dbReference>
<dbReference type="NCBIfam" id="TIGR00527">
    <property type="entry name" value="gcvH"/>
    <property type="match status" value="1"/>
</dbReference>
<dbReference type="NCBIfam" id="NF002270">
    <property type="entry name" value="PRK01202.1"/>
    <property type="match status" value="1"/>
</dbReference>
<dbReference type="PANTHER" id="PTHR11715">
    <property type="entry name" value="GLYCINE CLEAVAGE SYSTEM H PROTEIN"/>
    <property type="match status" value="1"/>
</dbReference>
<dbReference type="PANTHER" id="PTHR11715:SF3">
    <property type="entry name" value="GLYCINE CLEAVAGE SYSTEM H PROTEIN-RELATED"/>
    <property type="match status" value="1"/>
</dbReference>
<dbReference type="Pfam" id="PF01597">
    <property type="entry name" value="GCV_H"/>
    <property type="match status" value="1"/>
</dbReference>
<dbReference type="SUPFAM" id="SSF51230">
    <property type="entry name" value="Single hybrid motif"/>
    <property type="match status" value="1"/>
</dbReference>
<dbReference type="PROSITE" id="PS50968">
    <property type="entry name" value="BIOTINYL_LIPOYL"/>
    <property type="match status" value="1"/>
</dbReference>
<dbReference type="PROSITE" id="PS00189">
    <property type="entry name" value="LIPOYL"/>
    <property type="match status" value="1"/>
</dbReference>
<keyword id="KW-0450">Lipoyl</keyword>
<comment type="function">
    <text evidence="1">The glycine cleavage system catalyzes the degradation of glycine. The H protein shuttles the methylamine group of glycine from the P protein to the T protein.</text>
</comment>
<comment type="cofactor">
    <cofactor evidence="1">
        <name>(R)-lipoate</name>
        <dbReference type="ChEBI" id="CHEBI:83088"/>
    </cofactor>
    <text evidence="1">Binds 1 lipoyl cofactor covalently.</text>
</comment>
<comment type="subunit">
    <text evidence="1">The glycine cleavage system is composed of four proteins: P, T, L and H.</text>
</comment>
<comment type="similarity">
    <text evidence="1">Belongs to the GcvH family.</text>
</comment>
<evidence type="ECO:0000255" key="1">
    <source>
        <dbReference type="HAMAP-Rule" id="MF_00272"/>
    </source>
</evidence>
<evidence type="ECO:0000255" key="2">
    <source>
        <dbReference type="PROSITE-ProRule" id="PRU01066"/>
    </source>
</evidence>
<proteinExistence type="inferred from homology"/>
<feature type="chain" id="PRO_0000302435" description="Glycine cleavage system H protein">
    <location>
        <begin position="1"/>
        <end position="129"/>
    </location>
</feature>
<feature type="domain" description="Lipoyl-binding" evidence="2">
    <location>
        <begin position="24"/>
        <end position="106"/>
    </location>
</feature>
<feature type="modified residue" description="N6-lipoyllysine" evidence="1">
    <location>
        <position position="65"/>
    </location>
</feature>
<reference key="1">
    <citation type="submission" date="2006-08" db="EMBL/GenBank/DDBJ databases">
        <title>Complete sequence of chromosome 1 of Shewanella sp. MR-7.</title>
        <authorList>
            <person name="Copeland A."/>
            <person name="Lucas S."/>
            <person name="Lapidus A."/>
            <person name="Barry K."/>
            <person name="Detter J.C."/>
            <person name="Glavina del Rio T."/>
            <person name="Hammon N."/>
            <person name="Israni S."/>
            <person name="Dalin E."/>
            <person name="Tice H."/>
            <person name="Pitluck S."/>
            <person name="Kiss H."/>
            <person name="Brettin T."/>
            <person name="Bruce D."/>
            <person name="Han C."/>
            <person name="Tapia R."/>
            <person name="Gilna P."/>
            <person name="Schmutz J."/>
            <person name="Larimer F."/>
            <person name="Land M."/>
            <person name="Hauser L."/>
            <person name="Kyrpides N."/>
            <person name="Mikhailova N."/>
            <person name="Nealson K."/>
            <person name="Konstantinidis K."/>
            <person name="Klappenbach J."/>
            <person name="Tiedje J."/>
            <person name="Richardson P."/>
        </authorList>
    </citation>
    <scope>NUCLEOTIDE SEQUENCE [LARGE SCALE GENOMIC DNA]</scope>
    <source>
        <strain>MR-7</strain>
    </source>
</reference>
<sequence length="129" mass="13991">MSNIPTELKYASSHEWIRKEEDGSYTVGITEHAQELLGDMVFVELPEVGDTVTAGNDCAVAESVKAASDIYAPISGEVIAVNEALEDSPELVNSDAYGEGWFFRVMPSDESEVDALLDAEGYQAVIDEE</sequence>
<accession>Q0HZ29</accession>